<geneLocation type="chloroplast"/>
<accession>P62108</accession>
<accession>P09970</accession>
<evidence type="ECO:0000255" key="1">
    <source>
        <dbReference type="HAMAP-Rule" id="MF_01316"/>
    </source>
</evidence>
<name>PSBI_SINAL</name>
<sequence length="36" mass="4168">MLTLKLFVYTVVIFFVSLFIFGFLSNDPGRNPGREE</sequence>
<reference key="1">
    <citation type="journal article" date="1990" name="Nucleic Acids Res.">
        <title>Nucleotide sequence of the chloroplast psbI and trnS-GCU genes from mustard (Sinapis alba).</title>
        <authorList>
            <person name="Neuhaus H."/>
            <person name="Pfannschmidt T."/>
            <person name="Link G."/>
        </authorList>
    </citation>
    <scope>NUCLEOTIDE SEQUENCE [GENOMIC DNA]</scope>
</reference>
<dbReference type="EMBL" id="X17616">
    <property type="protein sequence ID" value="CAA35617.1"/>
    <property type="molecule type" value="Genomic_DNA"/>
</dbReference>
<dbReference type="PIR" id="S07877">
    <property type="entry name" value="S07877"/>
</dbReference>
<dbReference type="RefSeq" id="YP_009730651.1">
    <property type="nucleotide sequence ID" value="NC_045948.1"/>
</dbReference>
<dbReference type="SMR" id="P62108"/>
<dbReference type="GeneID" id="43960580"/>
<dbReference type="OrthoDB" id="564007at2759"/>
<dbReference type="GO" id="GO:0009535">
    <property type="term" value="C:chloroplast thylakoid membrane"/>
    <property type="evidence" value="ECO:0007669"/>
    <property type="project" value="UniProtKB-SubCell"/>
</dbReference>
<dbReference type="GO" id="GO:0009539">
    <property type="term" value="C:photosystem II reaction center"/>
    <property type="evidence" value="ECO:0007669"/>
    <property type="project" value="InterPro"/>
</dbReference>
<dbReference type="GO" id="GO:0015979">
    <property type="term" value="P:photosynthesis"/>
    <property type="evidence" value="ECO:0007669"/>
    <property type="project" value="UniProtKB-UniRule"/>
</dbReference>
<dbReference type="HAMAP" id="MF_01316">
    <property type="entry name" value="PSII_PsbI"/>
    <property type="match status" value="1"/>
</dbReference>
<dbReference type="InterPro" id="IPR003686">
    <property type="entry name" value="PSII_PsbI"/>
</dbReference>
<dbReference type="InterPro" id="IPR037271">
    <property type="entry name" value="PSII_PsbI_sf"/>
</dbReference>
<dbReference type="NCBIfam" id="NF002735">
    <property type="entry name" value="PRK02655.1"/>
    <property type="match status" value="1"/>
</dbReference>
<dbReference type="PANTHER" id="PTHR35772">
    <property type="entry name" value="PHOTOSYSTEM II REACTION CENTER PROTEIN I"/>
    <property type="match status" value="1"/>
</dbReference>
<dbReference type="PANTHER" id="PTHR35772:SF1">
    <property type="entry name" value="PHOTOSYSTEM II REACTION CENTER PROTEIN I"/>
    <property type="match status" value="1"/>
</dbReference>
<dbReference type="Pfam" id="PF02532">
    <property type="entry name" value="PsbI"/>
    <property type="match status" value="1"/>
</dbReference>
<dbReference type="SUPFAM" id="SSF161041">
    <property type="entry name" value="Photosystem II reaction center protein I, PsbI"/>
    <property type="match status" value="1"/>
</dbReference>
<comment type="function">
    <text evidence="1">One of the components of the core complex of photosystem II (PSII), required for its stability and/or assembly. PSII is a light-driven water:plastoquinone oxidoreductase that uses light energy to abstract electrons from H(2)O, generating O(2) and a proton gradient subsequently used for ATP formation. It consists of a core antenna complex that captures photons, and an electron transfer chain that converts photonic excitation into a charge separation.</text>
</comment>
<comment type="subunit">
    <text evidence="1">PSII is composed of 1 copy each of membrane proteins PsbA, PsbB, PsbC, PsbD, PsbE, PsbF, PsbH, PsbI, PsbJ, PsbK, PsbL, PsbM, PsbT, PsbX, PsbY, PsbZ, Psb30/Ycf12, at least 3 peripheral proteins of the oxygen-evolving complex and a large number of cofactors. It forms dimeric complexes.</text>
</comment>
<comment type="subcellular location">
    <subcellularLocation>
        <location evidence="1">Plastid</location>
        <location evidence="1">Chloroplast thylakoid membrane</location>
        <topology evidence="1">Single-pass membrane protein</topology>
    </subcellularLocation>
</comment>
<comment type="similarity">
    <text evidence="1">Belongs to the PsbI family.</text>
</comment>
<feature type="chain" id="PRO_0000219655" description="Photosystem II reaction center protein I">
    <location>
        <begin position="1"/>
        <end position="36"/>
    </location>
</feature>
<feature type="transmembrane region" description="Helical" evidence="1">
    <location>
        <begin position="4"/>
        <end position="24"/>
    </location>
</feature>
<protein>
    <recommendedName>
        <fullName evidence="1">Photosystem II reaction center protein I</fullName>
        <shortName evidence="1">PSII-I</shortName>
    </recommendedName>
    <alternativeName>
        <fullName evidence="1">PSII 4.8 kDa protein</fullName>
    </alternativeName>
</protein>
<organism>
    <name type="scientific">Sinapis alba</name>
    <name type="common">White mustard</name>
    <name type="synonym">Brassica hirta</name>
    <dbReference type="NCBI Taxonomy" id="3728"/>
    <lineage>
        <taxon>Eukaryota</taxon>
        <taxon>Viridiplantae</taxon>
        <taxon>Streptophyta</taxon>
        <taxon>Embryophyta</taxon>
        <taxon>Tracheophyta</taxon>
        <taxon>Spermatophyta</taxon>
        <taxon>Magnoliopsida</taxon>
        <taxon>eudicotyledons</taxon>
        <taxon>Gunneridae</taxon>
        <taxon>Pentapetalae</taxon>
        <taxon>rosids</taxon>
        <taxon>malvids</taxon>
        <taxon>Brassicales</taxon>
        <taxon>Brassicaceae</taxon>
        <taxon>Brassiceae</taxon>
        <taxon>Sinapis</taxon>
    </lineage>
</organism>
<proteinExistence type="inferred from homology"/>
<keyword id="KW-0150">Chloroplast</keyword>
<keyword id="KW-0472">Membrane</keyword>
<keyword id="KW-0602">Photosynthesis</keyword>
<keyword id="KW-0604">Photosystem II</keyword>
<keyword id="KW-0934">Plastid</keyword>
<keyword id="KW-0674">Reaction center</keyword>
<keyword id="KW-0793">Thylakoid</keyword>
<keyword id="KW-0812">Transmembrane</keyword>
<keyword id="KW-1133">Transmembrane helix</keyword>
<gene>
    <name evidence="1" type="primary">psbI</name>
</gene>